<keyword id="KW-0997">Cell inner membrane</keyword>
<keyword id="KW-1003">Cell membrane</keyword>
<keyword id="KW-0274">FAD</keyword>
<keyword id="KW-0285">Flavoprotein</keyword>
<keyword id="KW-0472">Membrane</keyword>
<keyword id="KW-0560">Oxidoreductase</keyword>
<keyword id="KW-1185">Reference proteome</keyword>
<dbReference type="EC" id="1.1.5.3"/>
<dbReference type="EMBL" id="AE005674">
    <property type="protein sequence ID" value="AAN43838.2"/>
    <property type="molecule type" value="Genomic_DNA"/>
</dbReference>
<dbReference type="EMBL" id="AE014073">
    <property type="protein sequence ID" value="AAP17656.1"/>
    <property type="molecule type" value="Genomic_DNA"/>
</dbReference>
<dbReference type="RefSeq" id="NP_708131.2">
    <property type="nucleotide sequence ID" value="NC_004337.2"/>
</dbReference>
<dbReference type="RefSeq" id="WP_000857257.1">
    <property type="nucleotide sequence ID" value="NZ_WPGW01000032.1"/>
</dbReference>
<dbReference type="SMR" id="P0A9C2"/>
<dbReference type="STRING" id="198214.SF2323"/>
<dbReference type="PaxDb" id="198214-SF2323"/>
<dbReference type="GeneID" id="1025493"/>
<dbReference type="GeneID" id="93774933"/>
<dbReference type="KEGG" id="sfl:SF2323"/>
<dbReference type="KEGG" id="sfx:S2456"/>
<dbReference type="PATRIC" id="fig|198214.7.peg.2783"/>
<dbReference type="HOGENOM" id="CLU_015740_0_1_6"/>
<dbReference type="UniPathway" id="UPA00618">
    <property type="reaction ID" value="UER00673"/>
</dbReference>
<dbReference type="Proteomes" id="UP000001006">
    <property type="component" value="Chromosome"/>
</dbReference>
<dbReference type="Proteomes" id="UP000002673">
    <property type="component" value="Chromosome"/>
</dbReference>
<dbReference type="GO" id="GO:0009331">
    <property type="term" value="C:glycerol-3-phosphate dehydrogenase (FAD) complex"/>
    <property type="evidence" value="ECO:0007669"/>
    <property type="project" value="InterPro"/>
</dbReference>
<dbReference type="GO" id="GO:0005886">
    <property type="term" value="C:plasma membrane"/>
    <property type="evidence" value="ECO:0007669"/>
    <property type="project" value="UniProtKB-SubCell"/>
</dbReference>
<dbReference type="GO" id="GO:0050660">
    <property type="term" value="F:flavin adenine dinucleotide binding"/>
    <property type="evidence" value="ECO:0007669"/>
    <property type="project" value="InterPro"/>
</dbReference>
<dbReference type="GO" id="GO:0010181">
    <property type="term" value="F:FMN binding"/>
    <property type="evidence" value="ECO:0007669"/>
    <property type="project" value="InterPro"/>
</dbReference>
<dbReference type="GO" id="GO:0004368">
    <property type="term" value="F:glycerol-3-phosphate dehydrogenase (quinone) activity"/>
    <property type="evidence" value="ECO:0007669"/>
    <property type="project" value="UniProtKB-EC"/>
</dbReference>
<dbReference type="GO" id="GO:0019563">
    <property type="term" value="P:glycerol catabolic process"/>
    <property type="evidence" value="ECO:0007669"/>
    <property type="project" value="UniProtKB-UniPathway"/>
</dbReference>
<dbReference type="GO" id="GO:0046168">
    <property type="term" value="P:glycerol-3-phosphate catabolic process"/>
    <property type="evidence" value="ECO:0007669"/>
    <property type="project" value="TreeGrafter"/>
</dbReference>
<dbReference type="CDD" id="cd19946">
    <property type="entry name" value="GlpA-like_Fer2_BFD-like"/>
    <property type="match status" value="1"/>
</dbReference>
<dbReference type="FunFam" id="1.10.10.1100:FF:000003">
    <property type="entry name" value="Glycerol-3-phosphate dehydrogenase"/>
    <property type="match status" value="1"/>
</dbReference>
<dbReference type="FunFam" id="3.50.50.60:FF:000096">
    <property type="entry name" value="Glycerol-3-phosphate dehydrogenase"/>
    <property type="match status" value="1"/>
</dbReference>
<dbReference type="FunFam" id="3.50.50.60:FF:000102">
    <property type="entry name" value="Glycerol-3-phosphate dehydrogenase"/>
    <property type="match status" value="1"/>
</dbReference>
<dbReference type="FunFam" id="3.50.50.60:FF:000106">
    <property type="entry name" value="Glycerol-3-phosphate dehydrogenase"/>
    <property type="match status" value="1"/>
</dbReference>
<dbReference type="Gene3D" id="1.10.10.1100">
    <property type="entry name" value="BFD-like [2Fe-2S]-binding domain"/>
    <property type="match status" value="1"/>
</dbReference>
<dbReference type="Gene3D" id="3.50.50.60">
    <property type="entry name" value="FAD/NAD(P)-binding domain"/>
    <property type="match status" value="3"/>
</dbReference>
<dbReference type="InterPro" id="IPR007419">
    <property type="entry name" value="BFD-like_2Fe2S-bd_dom"/>
</dbReference>
<dbReference type="InterPro" id="IPR041854">
    <property type="entry name" value="BFD-like_2Fe2S-bd_dom_sf"/>
</dbReference>
<dbReference type="InterPro" id="IPR006076">
    <property type="entry name" value="FAD-dep_OxRdtase"/>
</dbReference>
<dbReference type="InterPro" id="IPR036188">
    <property type="entry name" value="FAD/NAD-bd_sf"/>
</dbReference>
<dbReference type="InterPro" id="IPR000447">
    <property type="entry name" value="G3P_DH_FAD-dep"/>
</dbReference>
<dbReference type="InterPro" id="IPR017752">
    <property type="entry name" value="G3P_DH_GlpA_su"/>
</dbReference>
<dbReference type="NCBIfam" id="TIGR03377">
    <property type="entry name" value="glycerol3P_GlpA"/>
    <property type="match status" value="1"/>
</dbReference>
<dbReference type="NCBIfam" id="NF008313">
    <property type="entry name" value="PRK11101.1"/>
    <property type="match status" value="1"/>
</dbReference>
<dbReference type="PANTHER" id="PTHR11985:SF35">
    <property type="entry name" value="ANAEROBIC GLYCEROL-3-PHOSPHATE DEHYDROGENASE SUBUNIT A"/>
    <property type="match status" value="1"/>
</dbReference>
<dbReference type="PANTHER" id="PTHR11985">
    <property type="entry name" value="GLYCEROL-3-PHOSPHATE DEHYDROGENASE"/>
    <property type="match status" value="1"/>
</dbReference>
<dbReference type="Pfam" id="PF01266">
    <property type="entry name" value="DAO"/>
    <property type="match status" value="1"/>
</dbReference>
<dbReference type="Pfam" id="PF04324">
    <property type="entry name" value="Fer2_BFD"/>
    <property type="match status" value="1"/>
</dbReference>
<dbReference type="PRINTS" id="PR01001">
    <property type="entry name" value="FADG3PDH"/>
</dbReference>
<dbReference type="SUPFAM" id="SSF51905">
    <property type="entry name" value="FAD/NAD(P)-binding domain"/>
    <property type="match status" value="1"/>
</dbReference>
<dbReference type="PROSITE" id="PS00977">
    <property type="entry name" value="FAD_G3PDH_1"/>
    <property type="match status" value="1"/>
</dbReference>
<dbReference type="PROSITE" id="PS00978">
    <property type="entry name" value="FAD_G3PDH_2"/>
    <property type="match status" value="1"/>
</dbReference>
<name>GLPA_SHIFL</name>
<accession>P0A9C2</accession>
<accession>P13032</accession>
<accession>P78238</accession>
<organism>
    <name type="scientific">Shigella flexneri</name>
    <dbReference type="NCBI Taxonomy" id="623"/>
    <lineage>
        <taxon>Bacteria</taxon>
        <taxon>Pseudomonadati</taxon>
        <taxon>Pseudomonadota</taxon>
        <taxon>Gammaproteobacteria</taxon>
        <taxon>Enterobacterales</taxon>
        <taxon>Enterobacteriaceae</taxon>
        <taxon>Shigella</taxon>
    </lineage>
</organism>
<gene>
    <name type="primary">glpA</name>
    <name type="ordered locus">SF2323</name>
    <name type="ordered locus">S2456</name>
</gene>
<evidence type="ECO:0000250" key="1"/>
<evidence type="ECO:0000255" key="2"/>
<evidence type="ECO:0000305" key="3"/>
<feature type="chain" id="PRO_0000126096" description="Anaerobic glycerol-3-phosphate dehydrogenase subunit A">
    <location>
        <begin position="1"/>
        <end position="542"/>
    </location>
</feature>
<feature type="binding site" evidence="2">
    <location>
        <begin position="10"/>
        <end position="38"/>
    </location>
    <ligand>
        <name>FAD</name>
        <dbReference type="ChEBI" id="CHEBI:57692"/>
    </ligand>
</feature>
<reference key="1">
    <citation type="journal article" date="2002" name="Nucleic Acids Res.">
        <title>Genome sequence of Shigella flexneri 2a: insights into pathogenicity through comparison with genomes of Escherichia coli K12 and O157.</title>
        <authorList>
            <person name="Jin Q."/>
            <person name="Yuan Z."/>
            <person name="Xu J."/>
            <person name="Wang Y."/>
            <person name="Shen Y."/>
            <person name="Lu W."/>
            <person name="Wang J."/>
            <person name="Liu H."/>
            <person name="Yang J."/>
            <person name="Yang F."/>
            <person name="Zhang X."/>
            <person name="Zhang J."/>
            <person name="Yang G."/>
            <person name="Wu H."/>
            <person name="Qu D."/>
            <person name="Dong J."/>
            <person name="Sun L."/>
            <person name="Xue Y."/>
            <person name="Zhao A."/>
            <person name="Gao Y."/>
            <person name="Zhu J."/>
            <person name="Kan B."/>
            <person name="Ding K."/>
            <person name="Chen S."/>
            <person name="Cheng H."/>
            <person name="Yao Z."/>
            <person name="He B."/>
            <person name="Chen R."/>
            <person name="Ma D."/>
            <person name="Qiang B."/>
            <person name="Wen Y."/>
            <person name="Hou Y."/>
            <person name="Yu J."/>
        </authorList>
    </citation>
    <scope>NUCLEOTIDE SEQUENCE [LARGE SCALE GENOMIC DNA]</scope>
    <source>
        <strain>301 / Serotype 2a</strain>
    </source>
</reference>
<reference key="2">
    <citation type="journal article" date="2003" name="Infect. Immun.">
        <title>Complete genome sequence and comparative genomics of Shigella flexneri serotype 2a strain 2457T.</title>
        <authorList>
            <person name="Wei J."/>
            <person name="Goldberg M.B."/>
            <person name="Burland V."/>
            <person name="Venkatesan M.M."/>
            <person name="Deng W."/>
            <person name="Fournier G."/>
            <person name="Mayhew G.F."/>
            <person name="Plunkett G. III"/>
            <person name="Rose D.J."/>
            <person name="Darling A."/>
            <person name="Mau B."/>
            <person name="Perna N.T."/>
            <person name="Payne S.M."/>
            <person name="Runyen-Janecky L.J."/>
            <person name="Zhou S."/>
            <person name="Schwartz D.C."/>
            <person name="Blattner F.R."/>
        </authorList>
    </citation>
    <scope>NUCLEOTIDE SEQUENCE [LARGE SCALE GENOMIC DNA]</scope>
    <source>
        <strain>ATCC 700930 / 2457T / Serotype 2a</strain>
    </source>
</reference>
<proteinExistence type="inferred from homology"/>
<comment type="function">
    <text evidence="1">Conversion of glycerol 3-phosphate to dihydroxyacetone. Uses fumarate or nitrate as electron acceptor (By similarity).</text>
</comment>
<comment type="catalytic activity">
    <reaction>
        <text>a quinone + sn-glycerol 3-phosphate = dihydroxyacetone phosphate + a quinol</text>
        <dbReference type="Rhea" id="RHEA:18977"/>
        <dbReference type="ChEBI" id="CHEBI:24646"/>
        <dbReference type="ChEBI" id="CHEBI:57597"/>
        <dbReference type="ChEBI" id="CHEBI:57642"/>
        <dbReference type="ChEBI" id="CHEBI:132124"/>
        <dbReference type="EC" id="1.1.5.3"/>
    </reaction>
</comment>
<comment type="cofactor">
    <cofactor evidence="1">
        <name>FAD</name>
        <dbReference type="ChEBI" id="CHEBI:57692"/>
    </cofactor>
</comment>
<comment type="cofactor">
    <cofactor evidence="1">
        <name>FMN</name>
        <dbReference type="ChEBI" id="CHEBI:58210"/>
    </cofactor>
</comment>
<comment type="pathway">
    <text>Polyol metabolism; glycerol degradation via glycerol kinase pathway; glycerone phosphate from sn-glycerol 3-phosphate (anaerobic route): step 1/1.</text>
</comment>
<comment type="subunit">
    <text evidence="1">Composed of a catalytic GlpA/B dimer and of membrane bound GlpC.</text>
</comment>
<comment type="subcellular location">
    <subcellularLocation>
        <location evidence="1">Cell inner membrane</location>
        <topology evidence="1">Peripheral membrane protein</topology>
    </subcellularLocation>
    <text evidence="1">Loosely bound to the cytoplasmic membrane often occurring in vesicles associated with fumarate reductase.</text>
</comment>
<comment type="similarity">
    <text evidence="3">Belongs to the FAD-dependent glycerol-3-phosphate dehydrogenase family.</text>
</comment>
<sequence>MKTRDSQSSDVIIIGGGATGAGIARDCALRGLRVILVERHDIATGATGRNHGLLHSGARYAVTDAESARECISENQILKRIARHCVEPTNGLFITLPEDDLSFQATFIRACEEAGISAEAIDPQQARIIEPAVNPALIGAVKVPDGTVDPFRLTAANMLDAKEHGAVILTAHEVTGLIREGATVCGVRVRNHLTGETQALHAPVVVNAAGIWGQHIAEYADLRIRMFPAKGSLLIMDHRINQHVINRCRKPSDADILVPGDTISLIGTTSLRIDYNEIDDNRVTAEEVDILLREGEKLAPVMAKTRILRAYSGVRPLVASDDDPSGRNVSRGIVLLDHAERDGLDGFITITGGKLMTYRLMAEWATDAVCRKLGNTRPCTTADLALPGSQEPAEVTLRKVISLPAPLRGSAVYRHGDRTPAWLSEGRLHRSLVCECEAVTAGEVQYAVENLNVNSLLDLRRRTRVGMGTCQGELCACRAAGLLQRFNVTTSAQSIEQLSTFLNERWKGVQPIAWGDALRESEFTRWVYQGLCGLEKEQKDAL</sequence>
<protein>
    <recommendedName>
        <fullName>Anaerobic glycerol-3-phosphate dehydrogenase subunit A</fullName>
        <shortName>G-3-P dehydrogenase</shortName>
        <ecNumber>1.1.5.3</ecNumber>
    </recommendedName>
</protein>